<keyword id="KW-0030">Aminoacyl-tRNA synthetase</keyword>
<keyword id="KW-0067">ATP-binding</keyword>
<keyword id="KW-0963">Cytoplasm</keyword>
<keyword id="KW-0436">Ligase</keyword>
<keyword id="KW-0460">Magnesium</keyword>
<keyword id="KW-0479">Metal-binding</keyword>
<keyword id="KW-0547">Nucleotide-binding</keyword>
<keyword id="KW-0648">Protein biosynthesis</keyword>
<keyword id="KW-1185">Reference proteome</keyword>
<dbReference type="EC" id="6.1.1.6" evidence="1"/>
<dbReference type="EMBL" id="CP000097">
    <property type="protein sequence ID" value="ABB25129.1"/>
    <property type="molecule type" value="Genomic_DNA"/>
</dbReference>
<dbReference type="RefSeq" id="WP_011358995.1">
    <property type="nucleotide sequence ID" value="NC_007513.1"/>
</dbReference>
<dbReference type="SMR" id="Q3B0J9"/>
<dbReference type="STRING" id="316279.Syncc9902_0154"/>
<dbReference type="KEGG" id="sye:Syncc9902_0154"/>
<dbReference type="eggNOG" id="COG1190">
    <property type="taxonomic scope" value="Bacteria"/>
</dbReference>
<dbReference type="HOGENOM" id="CLU_008255_6_2_3"/>
<dbReference type="OrthoDB" id="9802326at2"/>
<dbReference type="Proteomes" id="UP000002712">
    <property type="component" value="Chromosome"/>
</dbReference>
<dbReference type="GO" id="GO:0005829">
    <property type="term" value="C:cytosol"/>
    <property type="evidence" value="ECO:0007669"/>
    <property type="project" value="TreeGrafter"/>
</dbReference>
<dbReference type="GO" id="GO:0005524">
    <property type="term" value="F:ATP binding"/>
    <property type="evidence" value="ECO:0007669"/>
    <property type="project" value="UniProtKB-UniRule"/>
</dbReference>
<dbReference type="GO" id="GO:0004824">
    <property type="term" value="F:lysine-tRNA ligase activity"/>
    <property type="evidence" value="ECO:0007669"/>
    <property type="project" value="UniProtKB-UniRule"/>
</dbReference>
<dbReference type="GO" id="GO:0000287">
    <property type="term" value="F:magnesium ion binding"/>
    <property type="evidence" value="ECO:0007669"/>
    <property type="project" value="UniProtKB-UniRule"/>
</dbReference>
<dbReference type="GO" id="GO:0000049">
    <property type="term" value="F:tRNA binding"/>
    <property type="evidence" value="ECO:0007669"/>
    <property type="project" value="TreeGrafter"/>
</dbReference>
<dbReference type="GO" id="GO:0006430">
    <property type="term" value="P:lysyl-tRNA aminoacylation"/>
    <property type="evidence" value="ECO:0007669"/>
    <property type="project" value="UniProtKB-UniRule"/>
</dbReference>
<dbReference type="CDD" id="cd00775">
    <property type="entry name" value="LysRS_core"/>
    <property type="match status" value="1"/>
</dbReference>
<dbReference type="CDD" id="cd04322">
    <property type="entry name" value="LysRS_N"/>
    <property type="match status" value="1"/>
</dbReference>
<dbReference type="FunFam" id="2.40.50.140:FF:000024">
    <property type="entry name" value="Lysine--tRNA ligase"/>
    <property type="match status" value="1"/>
</dbReference>
<dbReference type="Gene3D" id="3.30.930.10">
    <property type="entry name" value="Bira Bifunctional Protein, Domain 2"/>
    <property type="match status" value="1"/>
</dbReference>
<dbReference type="Gene3D" id="2.40.50.140">
    <property type="entry name" value="Nucleic acid-binding proteins"/>
    <property type="match status" value="1"/>
</dbReference>
<dbReference type="HAMAP" id="MF_00252">
    <property type="entry name" value="Lys_tRNA_synth_class2"/>
    <property type="match status" value="1"/>
</dbReference>
<dbReference type="InterPro" id="IPR004364">
    <property type="entry name" value="Aa-tRNA-synt_II"/>
</dbReference>
<dbReference type="InterPro" id="IPR006195">
    <property type="entry name" value="aa-tRNA-synth_II"/>
</dbReference>
<dbReference type="InterPro" id="IPR045864">
    <property type="entry name" value="aa-tRNA-synth_II/BPL/LPL"/>
</dbReference>
<dbReference type="InterPro" id="IPR002313">
    <property type="entry name" value="Lys-tRNA-ligase_II"/>
</dbReference>
<dbReference type="InterPro" id="IPR044136">
    <property type="entry name" value="Lys-tRNA-ligase_II_N"/>
</dbReference>
<dbReference type="InterPro" id="IPR018149">
    <property type="entry name" value="Lys-tRNA-synth_II_C"/>
</dbReference>
<dbReference type="InterPro" id="IPR012340">
    <property type="entry name" value="NA-bd_OB-fold"/>
</dbReference>
<dbReference type="InterPro" id="IPR004365">
    <property type="entry name" value="NA-bd_OB_tRNA"/>
</dbReference>
<dbReference type="NCBIfam" id="TIGR00499">
    <property type="entry name" value="lysS_bact"/>
    <property type="match status" value="1"/>
</dbReference>
<dbReference type="NCBIfam" id="NF001756">
    <property type="entry name" value="PRK00484.1"/>
    <property type="match status" value="1"/>
</dbReference>
<dbReference type="PANTHER" id="PTHR42918:SF15">
    <property type="entry name" value="LYSINE--TRNA LIGASE, CHLOROPLASTIC_MITOCHONDRIAL"/>
    <property type="match status" value="1"/>
</dbReference>
<dbReference type="PANTHER" id="PTHR42918">
    <property type="entry name" value="LYSYL-TRNA SYNTHETASE"/>
    <property type="match status" value="1"/>
</dbReference>
<dbReference type="Pfam" id="PF00152">
    <property type="entry name" value="tRNA-synt_2"/>
    <property type="match status" value="1"/>
</dbReference>
<dbReference type="Pfam" id="PF01336">
    <property type="entry name" value="tRNA_anti-codon"/>
    <property type="match status" value="1"/>
</dbReference>
<dbReference type="PRINTS" id="PR00982">
    <property type="entry name" value="TRNASYNTHLYS"/>
</dbReference>
<dbReference type="SUPFAM" id="SSF55681">
    <property type="entry name" value="Class II aaRS and biotin synthetases"/>
    <property type="match status" value="1"/>
</dbReference>
<dbReference type="SUPFAM" id="SSF50249">
    <property type="entry name" value="Nucleic acid-binding proteins"/>
    <property type="match status" value="1"/>
</dbReference>
<dbReference type="PROSITE" id="PS50862">
    <property type="entry name" value="AA_TRNA_LIGASE_II"/>
    <property type="match status" value="1"/>
</dbReference>
<gene>
    <name evidence="1" type="primary">lysS</name>
    <name type="ordered locus">Syncc9902_0154</name>
</gene>
<sequence length="502" mass="56424">MSELRDTRLEKANTLEQLGQGPYALTFDPSHRMAELQADHADLPNGEERELSVAVAGRVMTRRVMGKLAFFTLADETGTIQLFLEKAGLEAQQEGWFKQITSLVDAGDWLGVSGTLRRTDRGELSVKVRDWRMLSKSLQPLPDKWHGLADVEKRYRQRYLDLIVSPQSRETFRRRALLVSGIRRWLDERQFLEIETPVLQSEAGGADARPFITHHNTLDLPLYLRIATELHLKRLVVGGFERVYELGRIFRNEGMSTRHNPEFTSVEVYQAYSDYIGMMELTEAMIAEVCQQVCGGTRIHYQGTDIDLTPPWRRATMHELVEEATGLNFEAFTTRAQAAEAMEAAGLEVPGAADSVGRLLNEAFEQRVEASLIQPTFVTDYPIEISPLARKHRSKPGLVERFELFIVGRETANAFSELIDPVDQRQRLEAQQARKAAGDLEAQGLDEDFVHALEVGMPPTGGLGIGIDRLVMLLTDSPSIRDVIAFPLMRPESRPDEAPSVG</sequence>
<reference key="1">
    <citation type="submission" date="2005-08" db="EMBL/GenBank/DDBJ databases">
        <title>Complete sequence of Synechococcus sp. CC9902.</title>
        <authorList>
            <person name="Copeland A."/>
            <person name="Lucas S."/>
            <person name="Lapidus A."/>
            <person name="Barry K."/>
            <person name="Detter J.C."/>
            <person name="Glavina T."/>
            <person name="Hammon N."/>
            <person name="Israni S."/>
            <person name="Pitluck S."/>
            <person name="Martinez M."/>
            <person name="Schmutz J."/>
            <person name="Larimer F."/>
            <person name="Land M."/>
            <person name="Kyrpides N."/>
            <person name="Ivanova N."/>
            <person name="Richardson P."/>
        </authorList>
    </citation>
    <scope>NUCLEOTIDE SEQUENCE [LARGE SCALE GENOMIC DNA]</scope>
    <source>
        <strain>CC9902</strain>
    </source>
</reference>
<evidence type="ECO:0000255" key="1">
    <source>
        <dbReference type="HAMAP-Rule" id="MF_00252"/>
    </source>
</evidence>
<proteinExistence type="inferred from homology"/>
<comment type="catalytic activity">
    <reaction evidence="1">
        <text>tRNA(Lys) + L-lysine + ATP = L-lysyl-tRNA(Lys) + AMP + diphosphate</text>
        <dbReference type="Rhea" id="RHEA:20792"/>
        <dbReference type="Rhea" id="RHEA-COMP:9696"/>
        <dbReference type="Rhea" id="RHEA-COMP:9697"/>
        <dbReference type="ChEBI" id="CHEBI:30616"/>
        <dbReference type="ChEBI" id="CHEBI:32551"/>
        <dbReference type="ChEBI" id="CHEBI:33019"/>
        <dbReference type="ChEBI" id="CHEBI:78442"/>
        <dbReference type="ChEBI" id="CHEBI:78529"/>
        <dbReference type="ChEBI" id="CHEBI:456215"/>
        <dbReference type="EC" id="6.1.1.6"/>
    </reaction>
</comment>
<comment type="cofactor">
    <cofactor evidence="1">
        <name>Mg(2+)</name>
        <dbReference type="ChEBI" id="CHEBI:18420"/>
    </cofactor>
    <text evidence="1">Binds 3 Mg(2+) ions per subunit.</text>
</comment>
<comment type="subunit">
    <text evidence="1">Homodimer.</text>
</comment>
<comment type="subcellular location">
    <subcellularLocation>
        <location evidence="1">Cytoplasm</location>
    </subcellularLocation>
</comment>
<comment type="similarity">
    <text evidence="1">Belongs to the class-II aminoacyl-tRNA synthetase family.</text>
</comment>
<organism>
    <name type="scientific">Synechococcus sp. (strain CC9902)</name>
    <dbReference type="NCBI Taxonomy" id="316279"/>
    <lineage>
        <taxon>Bacteria</taxon>
        <taxon>Bacillati</taxon>
        <taxon>Cyanobacteriota</taxon>
        <taxon>Cyanophyceae</taxon>
        <taxon>Synechococcales</taxon>
        <taxon>Synechococcaceae</taxon>
        <taxon>Synechococcus</taxon>
    </lineage>
</organism>
<protein>
    <recommendedName>
        <fullName evidence="1">Lysine--tRNA ligase</fullName>
        <ecNumber evidence="1">6.1.1.6</ecNumber>
    </recommendedName>
    <alternativeName>
        <fullName evidence="1">Lysyl-tRNA synthetase</fullName>
        <shortName evidence="1">LysRS</shortName>
    </alternativeName>
</protein>
<accession>Q3B0J9</accession>
<feature type="chain" id="PRO_1000012955" description="Lysine--tRNA ligase">
    <location>
        <begin position="1"/>
        <end position="502"/>
    </location>
</feature>
<feature type="binding site" evidence="1">
    <location>
        <position position="403"/>
    </location>
    <ligand>
        <name>Mg(2+)</name>
        <dbReference type="ChEBI" id="CHEBI:18420"/>
        <label>1</label>
    </ligand>
</feature>
<feature type="binding site" evidence="1">
    <location>
        <position position="410"/>
    </location>
    <ligand>
        <name>Mg(2+)</name>
        <dbReference type="ChEBI" id="CHEBI:18420"/>
        <label>1</label>
    </ligand>
</feature>
<feature type="binding site" evidence="1">
    <location>
        <position position="410"/>
    </location>
    <ligand>
        <name>Mg(2+)</name>
        <dbReference type="ChEBI" id="CHEBI:18420"/>
        <label>2</label>
    </ligand>
</feature>
<name>SYK_SYNS9</name>